<accession>B3EHR1</accession>
<feature type="chain" id="PRO_1000119684" description="Chaperone protein DnaK">
    <location>
        <begin position="1"/>
        <end position="639"/>
    </location>
</feature>
<feature type="region of interest" description="Disordered" evidence="2">
    <location>
        <begin position="592"/>
        <end position="639"/>
    </location>
</feature>
<feature type="compositionally biased region" description="Low complexity" evidence="2">
    <location>
        <begin position="601"/>
        <end position="613"/>
    </location>
</feature>
<feature type="modified residue" description="Phosphothreonine; by autocatalysis" evidence="1">
    <location>
        <position position="196"/>
    </location>
</feature>
<sequence length="639" mass="69167">MGKIIGIDLGTTNSCVAVMQGTQPTVIENSEGNRTTPSMVAVTKTGDRLVGQAAKRQAITNPKNTVFSIKRFMGRKYDEVPNEKKLASYDVINEGGEARVKINDKIYSPQEVSAMILQKMKQTAEDFLGEKVTEAVITVPAYFNDAQRQATKDAGRIAGLDVKRIINEPTAAALAYGLDKKMSSEKVAVFDLGGGTFDISILELGDGVFEVKSTDGDTHLGGDDFDQKIIDYLADEFKKQEGIDLRNDAIALQRLKEAAEKAKVELSSRTDTEINLPFITATQEGPKHLVINLTRAKFEAMCADLFEKILEPCHRAVKNSKLDMKEIDEVVLVGGSTRIPKVQTLVKEFFGKEPNRSVNPDEVVAIGAAIQGGVLKGDVTDVLLLDVSPLSLGIETLGGVMTRLIEANTTIPTRKQEVFSTAADSQTSVEVHVLQGERPMASDNKTLGRFHLGDIPPAPRGVPQIEVTFDIDSNGILSVSAKDKATGKEQTIRIEASGKLNDAEIEKMKQDAKEHAAEDQKKKEEIDIRNSADSLIFSTEKQLTELGDKIPADKKPRLEGSLEKLKEAYKNGTAESIKSAMDDLNKEWSDIASSLYQTPDAGAPGASGPSAGGEPETGKKGGDGEVQNAEYEVIDGNDK</sequence>
<protein>
    <recommendedName>
        <fullName evidence="1">Chaperone protein DnaK</fullName>
    </recommendedName>
    <alternativeName>
        <fullName evidence="1">HSP70</fullName>
    </alternativeName>
    <alternativeName>
        <fullName evidence="1">Heat shock 70 kDa protein</fullName>
    </alternativeName>
    <alternativeName>
        <fullName evidence="1">Heat shock protein 70</fullName>
    </alternativeName>
</protein>
<evidence type="ECO:0000255" key="1">
    <source>
        <dbReference type="HAMAP-Rule" id="MF_00332"/>
    </source>
</evidence>
<evidence type="ECO:0000256" key="2">
    <source>
        <dbReference type="SAM" id="MobiDB-lite"/>
    </source>
</evidence>
<organism>
    <name type="scientific">Chlorobium limicola (strain DSM 245 / NBRC 103803 / 6330)</name>
    <dbReference type="NCBI Taxonomy" id="290315"/>
    <lineage>
        <taxon>Bacteria</taxon>
        <taxon>Pseudomonadati</taxon>
        <taxon>Chlorobiota</taxon>
        <taxon>Chlorobiia</taxon>
        <taxon>Chlorobiales</taxon>
        <taxon>Chlorobiaceae</taxon>
        <taxon>Chlorobium/Pelodictyon group</taxon>
        <taxon>Chlorobium</taxon>
    </lineage>
</organism>
<gene>
    <name evidence="1" type="primary">dnaK</name>
    <name type="ordered locus">Clim_0761</name>
</gene>
<proteinExistence type="inferred from homology"/>
<name>DNAK_CHLL2</name>
<dbReference type="EMBL" id="CP001097">
    <property type="protein sequence ID" value="ACD89841.1"/>
    <property type="molecule type" value="Genomic_DNA"/>
</dbReference>
<dbReference type="RefSeq" id="WP_012465721.1">
    <property type="nucleotide sequence ID" value="NC_010803.1"/>
</dbReference>
<dbReference type="SMR" id="B3EHR1"/>
<dbReference type="STRING" id="290315.Clim_0761"/>
<dbReference type="KEGG" id="cli:Clim_0761"/>
<dbReference type="eggNOG" id="COG0443">
    <property type="taxonomic scope" value="Bacteria"/>
</dbReference>
<dbReference type="HOGENOM" id="CLU_005965_2_1_10"/>
<dbReference type="OrthoDB" id="9766019at2"/>
<dbReference type="Proteomes" id="UP000008841">
    <property type="component" value="Chromosome"/>
</dbReference>
<dbReference type="GO" id="GO:0005524">
    <property type="term" value="F:ATP binding"/>
    <property type="evidence" value="ECO:0007669"/>
    <property type="project" value="UniProtKB-UniRule"/>
</dbReference>
<dbReference type="GO" id="GO:0140662">
    <property type="term" value="F:ATP-dependent protein folding chaperone"/>
    <property type="evidence" value="ECO:0007669"/>
    <property type="project" value="InterPro"/>
</dbReference>
<dbReference type="GO" id="GO:0051082">
    <property type="term" value="F:unfolded protein binding"/>
    <property type="evidence" value="ECO:0007669"/>
    <property type="project" value="InterPro"/>
</dbReference>
<dbReference type="CDD" id="cd10234">
    <property type="entry name" value="ASKHA_NBD_HSP70_DnaK-like"/>
    <property type="match status" value="1"/>
</dbReference>
<dbReference type="FunFam" id="2.60.34.10:FF:000014">
    <property type="entry name" value="Chaperone protein DnaK HSP70"/>
    <property type="match status" value="1"/>
</dbReference>
<dbReference type="FunFam" id="1.20.1270.10:FF:000001">
    <property type="entry name" value="Molecular chaperone DnaK"/>
    <property type="match status" value="1"/>
</dbReference>
<dbReference type="FunFam" id="3.30.420.40:FF:000004">
    <property type="entry name" value="Molecular chaperone DnaK"/>
    <property type="match status" value="1"/>
</dbReference>
<dbReference type="FunFam" id="3.90.640.10:FF:000003">
    <property type="entry name" value="Molecular chaperone DnaK"/>
    <property type="match status" value="1"/>
</dbReference>
<dbReference type="Gene3D" id="1.20.1270.10">
    <property type="match status" value="1"/>
</dbReference>
<dbReference type="Gene3D" id="3.30.420.40">
    <property type="match status" value="2"/>
</dbReference>
<dbReference type="Gene3D" id="3.90.640.10">
    <property type="entry name" value="Actin, Chain A, domain 4"/>
    <property type="match status" value="1"/>
</dbReference>
<dbReference type="Gene3D" id="2.60.34.10">
    <property type="entry name" value="Substrate Binding Domain Of DNAk, Chain A, domain 1"/>
    <property type="match status" value="1"/>
</dbReference>
<dbReference type="HAMAP" id="MF_00332">
    <property type="entry name" value="DnaK"/>
    <property type="match status" value="1"/>
</dbReference>
<dbReference type="InterPro" id="IPR043129">
    <property type="entry name" value="ATPase_NBD"/>
</dbReference>
<dbReference type="InterPro" id="IPR012725">
    <property type="entry name" value="Chaperone_DnaK"/>
</dbReference>
<dbReference type="InterPro" id="IPR018181">
    <property type="entry name" value="Heat_shock_70_CS"/>
</dbReference>
<dbReference type="InterPro" id="IPR029048">
    <property type="entry name" value="HSP70_C_sf"/>
</dbReference>
<dbReference type="InterPro" id="IPR029047">
    <property type="entry name" value="HSP70_peptide-bd_sf"/>
</dbReference>
<dbReference type="InterPro" id="IPR013126">
    <property type="entry name" value="Hsp_70_fam"/>
</dbReference>
<dbReference type="NCBIfam" id="NF001413">
    <property type="entry name" value="PRK00290.1"/>
    <property type="match status" value="1"/>
</dbReference>
<dbReference type="NCBIfam" id="NF003520">
    <property type="entry name" value="PRK05183.1"/>
    <property type="match status" value="1"/>
</dbReference>
<dbReference type="NCBIfam" id="TIGR02350">
    <property type="entry name" value="prok_dnaK"/>
    <property type="match status" value="1"/>
</dbReference>
<dbReference type="PANTHER" id="PTHR19375">
    <property type="entry name" value="HEAT SHOCK PROTEIN 70KDA"/>
    <property type="match status" value="1"/>
</dbReference>
<dbReference type="Pfam" id="PF00012">
    <property type="entry name" value="HSP70"/>
    <property type="match status" value="1"/>
</dbReference>
<dbReference type="PRINTS" id="PR00301">
    <property type="entry name" value="HEATSHOCK70"/>
</dbReference>
<dbReference type="SUPFAM" id="SSF53067">
    <property type="entry name" value="Actin-like ATPase domain"/>
    <property type="match status" value="2"/>
</dbReference>
<dbReference type="SUPFAM" id="SSF100934">
    <property type="entry name" value="Heat shock protein 70kD (HSP70), C-terminal subdomain"/>
    <property type="match status" value="1"/>
</dbReference>
<dbReference type="SUPFAM" id="SSF100920">
    <property type="entry name" value="Heat shock protein 70kD (HSP70), peptide-binding domain"/>
    <property type="match status" value="1"/>
</dbReference>
<dbReference type="PROSITE" id="PS00297">
    <property type="entry name" value="HSP70_1"/>
    <property type="match status" value="1"/>
</dbReference>
<dbReference type="PROSITE" id="PS00329">
    <property type="entry name" value="HSP70_2"/>
    <property type="match status" value="1"/>
</dbReference>
<dbReference type="PROSITE" id="PS01036">
    <property type="entry name" value="HSP70_3"/>
    <property type="match status" value="1"/>
</dbReference>
<comment type="function">
    <text evidence="1">Acts as a chaperone.</text>
</comment>
<comment type="induction">
    <text evidence="1">By stress conditions e.g. heat shock.</text>
</comment>
<comment type="similarity">
    <text evidence="1">Belongs to the heat shock protein 70 family.</text>
</comment>
<reference key="1">
    <citation type="submission" date="2008-05" db="EMBL/GenBank/DDBJ databases">
        <title>Complete sequence of Chlorobium limicola DSM 245.</title>
        <authorList>
            <consortium name="US DOE Joint Genome Institute"/>
            <person name="Lucas S."/>
            <person name="Copeland A."/>
            <person name="Lapidus A."/>
            <person name="Glavina del Rio T."/>
            <person name="Dalin E."/>
            <person name="Tice H."/>
            <person name="Bruce D."/>
            <person name="Goodwin L."/>
            <person name="Pitluck S."/>
            <person name="Schmutz J."/>
            <person name="Larimer F."/>
            <person name="Land M."/>
            <person name="Hauser L."/>
            <person name="Kyrpides N."/>
            <person name="Ovchinnikova G."/>
            <person name="Zhao F."/>
            <person name="Li T."/>
            <person name="Liu Z."/>
            <person name="Overmann J."/>
            <person name="Bryant D.A."/>
            <person name="Richardson P."/>
        </authorList>
    </citation>
    <scope>NUCLEOTIDE SEQUENCE [LARGE SCALE GENOMIC DNA]</scope>
    <source>
        <strain>DSM 245 / NBRC 103803 / 6330</strain>
    </source>
</reference>
<keyword id="KW-0067">ATP-binding</keyword>
<keyword id="KW-0143">Chaperone</keyword>
<keyword id="KW-0547">Nucleotide-binding</keyword>
<keyword id="KW-0597">Phosphoprotein</keyword>
<keyword id="KW-0346">Stress response</keyword>